<evidence type="ECO:0000250" key="1"/>
<evidence type="ECO:0000255" key="2">
    <source>
        <dbReference type="HAMAP-Rule" id="MF_00047"/>
    </source>
</evidence>
<comment type="function">
    <text evidence="2">Cell wall formation.</text>
</comment>
<comment type="catalytic activity">
    <reaction evidence="2">
        <text>2 D-alanine + ATP = D-alanyl-D-alanine + ADP + phosphate + H(+)</text>
        <dbReference type="Rhea" id="RHEA:11224"/>
        <dbReference type="ChEBI" id="CHEBI:15378"/>
        <dbReference type="ChEBI" id="CHEBI:30616"/>
        <dbReference type="ChEBI" id="CHEBI:43474"/>
        <dbReference type="ChEBI" id="CHEBI:57416"/>
        <dbReference type="ChEBI" id="CHEBI:57822"/>
        <dbReference type="ChEBI" id="CHEBI:456216"/>
        <dbReference type="EC" id="6.3.2.4"/>
    </reaction>
</comment>
<comment type="cofactor">
    <cofactor evidence="1">
        <name>Mg(2+)</name>
        <dbReference type="ChEBI" id="CHEBI:18420"/>
    </cofactor>
    <cofactor evidence="1">
        <name>Mn(2+)</name>
        <dbReference type="ChEBI" id="CHEBI:29035"/>
    </cofactor>
    <text evidence="1">Binds 2 magnesium or manganese ions per subunit.</text>
</comment>
<comment type="pathway">
    <text evidence="2">Cell wall biogenesis; peptidoglycan biosynthesis.</text>
</comment>
<comment type="subcellular location">
    <subcellularLocation>
        <location evidence="2">Cytoplasm</location>
    </subcellularLocation>
</comment>
<comment type="similarity">
    <text evidence="2">Belongs to the D-alanine--D-alanine ligase family.</text>
</comment>
<accession>A4J5G8</accession>
<reference key="1">
    <citation type="submission" date="2007-03" db="EMBL/GenBank/DDBJ databases">
        <title>Complete sequence of Desulfotomaculum reducens MI-1.</title>
        <authorList>
            <consortium name="US DOE Joint Genome Institute"/>
            <person name="Copeland A."/>
            <person name="Lucas S."/>
            <person name="Lapidus A."/>
            <person name="Barry K."/>
            <person name="Detter J.C."/>
            <person name="Glavina del Rio T."/>
            <person name="Hammon N."/>
            <person name="Israni S."/>
            <person name="Dalin E."/>
            <person name="Tice H."/>
            <person name="Pitluck S."/>
            <person name="Sims D."/>
            <person name="Brettin T."/>
            <person name="Bruce D."/>
            <person name="Han C."/>
            <person name="Tapia R."/>
            <person name="Schmutz J."/>
            <person name="Larimer F."/>
            <person name="Land M."/>
            <person name="Hauser L."/>
            <person name="Kyrpides N."/>
            <person name="Kim E."/>
            <person name="Tebo B.M."/>
            <person name="Richardson P."/>
        </authorList>
    </citation>
    <scope>NUCLEOTIDE SEQUENCE [LARGE SCALE GENOMIC DNA]</scope>
    <source>
        <strain>ATCC BAA-1160 / DSM 100696 / MI-1</strain>
    </source>
</reference>
<gene>
    <name evidence="2" type="primary">ddl</name>
    <name type="ordered locus">Dred_1796</name>
</gene>
<sequence>MALRIGVLCGGRSAEREVSLRSGEAVYQALMAAGYNDVVKIDVGYDLVEQLKGNEIQVAFLALHGKYGEDGTIQGLLEMLDIPYTGSGVLASALAINKIATKKIFKMEGIPTPAFSVITKKEVEDKSLQEAALRAIKEVGVPAVVKANTQGSTIGITFVHVKEKMAEAIESALKYDQDVLVEQFVAGTEVTASVLGNNSPEALPLIEITSVTGVYDYQSKYTPGMSDHIIPPRLPQDIQEKIKELAIKSFLSLGCRGLGRIDFIIRDNQPYALEVNTLPGMTATSLFPDAANYAGISFPELTDRLIKLALEQ</sequence>
<organism>
    <name type="scientific">Desulforamulus reducens (strain ATCC BAA-1160 / DSM 100696 / MI-1)</name>
    <name type="common">Desulfotomaculum reducens</name>
    <dbReference type="NCBI Taxonomy" id="349161"/>
    <lineage>
        <taxon>Bacteria</taxon>
        <taxon>Bacillati</taxon>
        <taxon>Bacillota</taxon>
        <taxon>Clostridia</taxon>
        <taxon>Eubacteriales</taxon>
        <taxon>Peptococcaceae</taxon>
        <taxon>Desulforamulus</taxon>
    </lineage>
</organism>
<keyword id="KW-0067">ATP-binding</keyword>
<keyword id="KW-0133">Cell shape</keyword>
<keyword id="KW-0961">Cell wall biogenesis/degradation</keyword>
<keyword id="KW-0963">Cytoplasm</keyword>
<keyword id="KW-0436">Ligase</keyword>
<keyword id="KW-0460">Magnesium</keyword>
<keyword id="KW-0464">Manganese</keyword>
<keyword id="KW-0479">Metal-binding</keyword>
<keyword id="KW-0547">Nucleotide-binding</keyword>
<keyword id="KW-0573">Peptidoglycan synthesis</keyword>
<keyword id="KW-1185">Reference proteome</keyword>
<protein>
    <recommendedName>
        <fullName evidence="2">D-alanine--D-alanine ligase</fullName>
        <ecNumber evidence="2">6.3.2.4</ecNumber>
    </recommendedName>
    <alternativeName>
        <fullName evidence="2">D-Ala-D-Ala ligase</fullName>
    </alternativeName>
    <alternativeName>
        <fullName evidence="2">D-alanylalanine synthetase</fullName>
    </alternativeName>
</protein>
<feature type="chain" id="PRO_0000341088" description="D-alanine--D-alanine ligase">
    <location>
        <begin position="1"/>
        <end position="312"/>
    </location>
</feature>
<feature type="domain" description="ATP-grasp" evidence="2">
    <location>
        <begin position="102"/>
        <end position="307"/>
    </location>
</feature>
<feature type="binding site" evidence="2">
    <location>
        <begin position="136"/>
        <end position="191"/>
    </location>
    <ligand>
        <name>ATP</name>
        <dbReference type="ChEBI" id="CHEBI:30616"/>
    </ligand>
</feature>
<feature type="binding site" evidence="2">
    <location>
        <position position="262"/>
    </location>
    <ligand>
        <name>Mg(2+)</name>
        <dbReference type="ChEBI" id="CHEBI:18420"/>
        <label>1</label>
    </ligand>
</feature>
<feature type="binding site" evidence="2">
    <location>
        <position position="274"/>
    </location>
    <ligand>
        <name>Mg(2+)</name>
        <dbReference type="ChEBI" id="CHEBI:18420"/>
        <label>1</label>
    </ligand>
</feature>
<feature type="binding site" evidence="2">
    <location>
        <position position="274"/>
    </location>
    <ligand>
        <name>Mg(2+)</name>
        <dbReference type="ChEBI" id="CHEBI:18420"/>
        <label>2</label>
    </ligand>
</feature>
<feature type="binding site" evidence="2">
    <location>
        <position position="276"/>
    </location>
    <ligand>
        <name>Mg(2+)</name>
        <dbReference type="ChEBI" id="CHEBI:18420"/>
        <label>2</label>
    </ligand>
</feature>
<proteinExistence type="inferred from homology"/>
<name>DDL_DESRM</name>
<dbReference type="EC" id="6.3.2.4" evidence="2"/>
<dbReference type="EMBL" id="CP000612">
    <property type="protein sequence ID" value="ABO50321.1"/>
    <property type="molecule type" value="Genomic_DNA"/>
</dbReference>
<dbReference type="RefSeq" id="WP_011878133.1">
    <property type="nucleotide sequence ID" value="NC_009253.1"/>
</dbReference>
<dbReference type="SMR" id="A4J5G8"/>
<dbReference type="STRING" id="349161.Dred_1796"/>
<dbReference type="KEGG" id="drm:Dred_1796"/>
<dbReference type="eggNOG" id="COG1181">
    <property type="taxonomic scope" value="Bacteria"/>
</dbReference>
<dbReference type="HOGENOM" id="CLU_039268_2_0_9"/>
<dbReference type="OrthoDB" id="9813261at2"/>
<dbReference type="UniPathway" id="UPA00219"/>
<dbReference type="Proteomes" id="UP000001556">
    <property type="component" value="Chromosome"/>
</dbReference>
<dbReference type="GO" id="GO:0005737">
    <property type="term" value="C:cytoplasm"/>
    <property type="evidence" value="ECO:0007669"/>
    <property type="project" value="UniProtKB-SubCell"/>
</dbReference>
<dbReference type="GO" id="GO:0005524">
    <property type="term" value="F:ATP binding"/>
    <property type="evidence" value="ECO:0007669"/>
    <property type="project" value="UniProtKB-KW"/>
</dbReference>
<dbReference type="GO" id="GO:0008716">
    <property type="term" value="F:D-alanine-D-alanine ligase activity"/>
    <property type="evidence" value="ECO:0007669"/>
    <property type="project" value="UniProtKB-UniRule"/>
</dbReference>
<dbReference type="GO" id="GO:0046872">
    <property type="term" value="F:metal ion binding"/>
    <property type="evidence" value="ECO:0007669"/>
    <property type="project" value="UniProtKB-KW"/>
</dbReference>
<dbReference type="GO" id="GO:0071555">
    <property type="term" value="P:cell wall organization"/>
    <property type="evidence" value="ECO:0007669"/>
    <property type="project" value="UniProtKB-KW"/>
</dbReference>
<dbReference type="GO" id="GO:0009252">
    <property type="term" value="P:peptidoglycan biosynthetic process"/>
    <property type="evidence" value="ECO:0007669"/>
    <property type="project" value="UniProtKB-UniRule"/>
</dbReference>
<dbReference type="GO" id="GO:0008360">
    <property type="term" value="P:regulation of cell shape"/>
    <property type="evidence" value="ECO:0007669"/>
    <property type="project" value="UniProtKB-KW"/>
</dbReference>
<dbReference type="Gene3D" id="3.40.50.20">
    <property type="match status" value="1"/>
</dbReference>
<dbReference type="Gene3D" id="3.30.1490.20">
    <property type="entry name" value="ATP-grasp fold, A domain"/>
    <property type="match status" value="1"/>
</dbReference>
<dbReference type="Gene3D" id="3.30.470.20">
    <property type="entry name" value="ATP-grasp fold, B domain"/>
    <property type="match status" value="1"/>
</dbReference>
<dbReference type="HAMAP" id="MF_00047">
    <property type="entry name" value="Dala_Dala_lig"/>
    <property type="match status" value="1"/>
</dbReference>
<dbReference type="InterPro" id="IPR011761">
    <property type="entry name" value="ATP-grasp"/>
</dbReference>
<dbReference type="InterPro" id="IPR013815">
    <property type="entry name" value="ATP_grasp_subdomain_1"/>
</dbReference>
<dbReference type="InterPro" id="IPR000291">
    <property type="entry name" value="D-Ala_lig_Van_CS"/>
</dbReference>
<dbReference type="InterPro" id="IPR005905">
    <property type="entry name" value="D_ala_D_ala"/>
</dbReference>
<dbReference type="InterPro" id="IPR011095">
    <property type="entry name" value="Dala_Dala_lig_C"/>
</dbReference>
<dbReference type="InterPro" id="IPR011127">
    <property type="entry name" value="Dala_Dala_lig_N"/>
</dbReference>
<dbReference type="InterPro" id="IPR016185">
    <property type="entry name" value="PreATP-grasp_dom_sf"/>
</dbReference>
<dbReference type="NCBIfam" id="TIGR01205">
    <property type="entry name" value="D_ala_D_alaTIGR"/>
    <property type="match status" value="1"/>
</dbReference>
<dbReference type="NCBIfam" id="NF002378">
    <property type="entry name" value="PRK01372.1"/>
    <property type="match status" value="1"/>
</dbReference>
<dbReference type="NCBIfam" id="NF002528">
    <property type="entry name" value="PRK01966.1-4"/>
    <property type="match status" value="1"/>
</dbReference>
<dbReference type="PANTHER" id="PTHR23132">
    <property type="entry name" value="D-ALANINE--D-ALANINE LIGASE"/>
    <property type="match status" value="1"/>
</dbReference>
<dbReference type="PANTHER" id="PTHR23132:SF23">
    <property type="entry name" value="D-ALANINE--D-ALANINE LIGASE B"/>
    <property type="match status" value="1"/>
</dbReference>
<dbReference type="Pfam" id="PF07478">
    <property type="entry name" value="Dala_Dala_lig_C"/>
    <property type="match status" value="1"/>
</dbReference>
<dbReference type="Pfam" id="PF01820">
    <property type="entry name" value="Dala_Dala_lig_N"/>
    <property type="match status" value="1"/>
</dbReference>
<dbReference type="PIRSF" id="PIRSF039102">
    <property type="entry name" value="Ddl/VanB"/>
    <property type="match status" value="1"/>
</dbReference>
<dbReference type="SMART" id="SM01209">
    <property type="entry name" value="GARS_A"/>
    <property type="match status" value="1"/>
</dbReference>
<dbReference type="SUPFAM" id="SSF56059">
    <property type="entry name" value="Glutathione synthetase ATP-binding domain-like"/>
    <property type="match status" value="1"/>
</dbReference>
<dbReference type="SUPFAM" id="SSF52440">
    <property type="entry name" value="PreATP-grasp domain"/>
    <property type="match status" value="1"/>
</dbReference>
<dbReference type="PROSITE" id="PS50975">
    <property type="entry name" value="ATP_GRASP"/>
    <property type="match status" value="1"/>
</dbReference>
<dbReference type="PROSITE" id="PS00843">
    <property type="entry name" value="DALA_DALA_LIGASE_1"/>
    <property type="match status" value="1"/>
</dbReference>
<dbReference type="PROSITE" id="PS00844">
    <property type="entry name" value="DALA_DALA_LIGASE_2"/>
    <property type="match status" value="1"/>
</dbReference>